<organism>
    <name type="scientific">Eudromia elegans</name>
    <name type="common">Elegant crested-tinamou</name>
    <dbReference type="NCBI Taxonomy" id="8805"/>
    <lineage>
        <taxon>Eukaryota</taxon>
        <taxon>Metazoa</taxon>
        <taxon>Chordata</taxon>
        <taxon>Craniata</taxon>
        <taxon>Vertebrata</taxon>
        <taxon>Euteleostomi</taxon>
        <taxon>Archelosauria</taxon>
        <taxon>Archosauria</taxon>
        <taxon>Dinosauria</taxon>
        <taxon>Saurischia</taxon>
        <taxon>Theropoda</taxon>
        <taxon>Coelurosauria</taxon>
        <taxon>Aves</taxon>
        <taxon>Palaeognathae</taxon>
        <taxon>Tinamiformes</taxon>
        <taxon>Tinamidae</taxon>
        <taxon>Eudromia</taxon>
    </lineage>
</organism>
<protein>
    <recommendedName>
        <fullName>Alpha-crystallin B chain</fullName>
    </recommendedName>
    <alternativeName>
        <fullName>Alpha(B)-crystallin</fullName>
    </alternativeName>
</protein>
<proteinExistence type="evidence at transcript level"/>
<gene>
    <name type="primary">CRYAB</name>
</gene>
<feature type="chain" id="PRO_0000125919" description="Alpha-crystallin B chain">
    <location>
        <begin position="1" status="less than"/>
        <end position="52" status="greater than"/>
    </location>
</feature>
<feature type="non-terminal residue">
    <location>
        <position position="1"/>
    </location>
</feature>
<feature type="non-terminal residue">
    <location>
        <position position="52"/>
    </location>
</feature>
<evidence type="ECO:0000250" key="1"/>
<evidence type="ECO:0000255" key="2">
    <source>
        <dbReference type="PROSITE-ProRule" id="PRU00285"/>
    </source>
</evidence>
<name>CRYAB_EUDEL</name>
<keyword id="KW-0273">Eye lens protein</keyword>
<reference key="1">
    <citation type="journal article" date="1997" name="Mol. Phylogenet. Evol.">
        <title>Alpha-crystallin sequences support a galliform/anseriform clade.</title>
        <authorList>
            <person name="Caspers G.J."/>
            <person name="Uit de Weerd D."/>
            <person name="Wattel J."/>
            <person name="de Jong W.W."/>
        </authorList>
    </citation>
    <scope>NUCLEOTIDE SEQUENCE [MRNA]</scope>
</reference>
<dbReference type="EMBL" id="X96596">
    <property type="protein sequence ID" value="CAA65414.1"/>
    <property type="molecule type" value="mRNA"/>
</dbReference>
<dbReference type="GO" id="GO:0042803">
    <property type="term" value="F:protein homodimerization activity"/>
    <property type="evidence" value="ECO:0000250"/>
    <property type="project" value="UniProtKB"/>
</dbReference>
<dbReference type="GO" id="GO:0005212">
    <property type="term" value="F:structural constituent of eye lens"/>
    <property type="evidence" value="ECO:0007669"/>
    <property type="project" value="UniProtKB-KW"/>
</dbReference>
<dbReference type="InterPro" id="IPR003090">
    <property type="entry name" value="Alpha-crystallin_N"/>
</dbReference>
<dbReference type="Pfam" id="PF00525">
    <property type="entry name" value="Crystallin"/>
    <property type="match status" value="1"/>
</dbReference>
<comment type="function">
    <text>May contribute to the transparency and refractive index of the lens.</text>
</comment>
<comment type="subunit">
    <text evidence="1">Homodimer. Aggregates with homologous proteins, including alpha-A-crystallin and the small heat shock protein HSPB1, to form large heteromeric complexes (By similarity).</text>
</comment>
<comment type="similarity">
    <text evidence="2">Belongs to the small heat shock protein (HSP20) family.</text>
</comment>
<sequence>LIRRPLLSFLAPSRIFDQTFGEHLQESELLPASPGFSSFLMRSPIFRMPSWV</sequence>
<accession>O12991</accession>